<reference key="1">
    <citation type="journal article" date="2013" name="PLoS ONE">
        <title>Genomic and secretomic analyses reveal unique features of the lignocellulolytic enzyme system of Penicillium decumbens.</title>
        <authorList>
            <person name="Liu G."/>
            <person name="Zhang L."/>
            <person name="Wei X."/>
            <person name="Zou G."/>
            <person name="Qin Y."/>
            <person name="Ma L."/>
            <person name="Li J."/>
            <person name="Zheng H."/>
            <person name="Wang S."/>
            <person name="Wang C."/>
            <person name="Xun L."/>
            <person name="Zhao G.-P."/>
            <person name="Zhou Z."/>
            <person name="Qu Y."/>
        </authorList>
    </citation>
    <scope>NUCLEOTIDE SEQUENCE [LARGE SCALE GENOMIC DNA]</scope>
    <source>
        <strain>114-2 / CGMCC 5302</strain>
    </source>
</reference>
<reference key="2">
    <citation type="journal article" date="2017" name="J. Am. Chem. Soc.">
        <title>Collaborative Biosynthesis of Maleimide- and Succinimide-Containing Natural Products by Fungal Polyketide Megasynthases.</title>
        <authorList>
            <person name="Sato M."/>
            <person name="Dander J.E."/>
            <person name="Sato C."/>
            <person name="Hung Y.S."/>
            <person name="Gao S.S."/>
            <person name="Tang M.C."/>
            <person name="Hang L."/>
            <person name="Winter J.M."/>
            <person name="Garg N.K."/>
            <person name="Watanabe K."/>
            <person name="Tang Y."/>
        </authorList>
    </citation>
    <scope>FUNCTION</scope>
    <scope>INDUCTION</scope>
    <scope>CATALYTIC ACTIVITY</scope>
    <scope>PATHWAY</scope>
</reference>
<reference key="3">
    <citation type="journal article" date="2020" name="Chem. Commun. (Camb.)">
        <title>Evidence for enzyme catalysed intramolecular [4+2] Diels-Alder cyclization during the biosynthesis of pyrichalasin H.</title>
        <authorList>
            <person name="Hantke V."/>
            <person name="Skellam E.J."/>
            <person name="Cox R.J."/>
        </authorList>
    </citation>
    <scope>FUNCTION</scope>
</reference>
<feature type="chain" id="PRO_0000453760" description="Aminotransferase poxL">
    <location>
        <begin position="1"/>
        <end position="365"/>
    </location>
</feature>
<feature type="binding site" evidence="1">
    <location>
        <position position="92"/>
    </location>
    <ligand>
        <name>pyridoxal 5'-phosphate</name>
        <dbReference type="ChEBI" id="CHEBI:597326"/>
    </ligand>
</feature>
<feature type="binding site" evidence="1">
    <location>
        <position position="229"/>
    </location>
    <ligand>
        <name>pyridoxal 5'-phosphate</name>
        <dbReference type="ChEBI" id="CHEBI:597326"/>
    </ligand>
</feature>
<feature type="modified residue" description="N6-(pyridoxal phosphate)lysine" evidence="1">
    <location>
        <position position="193"/>
    </location>
</feature>
<dbReference type="EC" id="2.6.1.-" evidence="2"/>
<dbReference type="EMBL" id="KB644411">
    <property type="protein sequence ID" value="EPS29075.1"/>
    <property type="molecule type" value="Genomic_DNA"/>
</dbReference>
<dbReference type="SMR" id="S7ZEI5"/>
<dbReference type="STRING" id="933388.S7ZEI5"/>
<dbReference type="eggNOG" id="KOG0975">
    <property type="taxonomic scope" value="Eukaryota"/>
</dbReference>
<dbReference type="HOGENOM" id="CLU_031922_1_0_1"/>
<dbReference type="OrthoDB" id="409992at2759"/>
<dbReference type="PhylomeDB" id="S7ZEI5"/>
<dbReference type="Proteomes" id="UP000019376">
    <property type="component" value="Unassembled WGS sequence"/>
</dbReference>
<dbReference type="GO" id="GO:0004084">
    <property type="term" value="F:branched-chain-amino-acid transaminase activity"/>
    <property type="evidence" value="ECO:0007669"/>
    <property type="project" value="InterPro"/>
</dbReference>
<dbReference type="GO" id="GO:0009081">
    <property type="term" value="P:branched-chain amino acid metabolic process"/>
    <property type="evidence" value="ECO:0007669"/>
    <property type="project" value="InterPro"/>
</dbReference>
<dbReference type="CDD" id="cd01557">
    <property type="entry name" value="BCAT_beta_family"/>
    <property type="match status" value="1"/>
</dbReference>
<dbReference type="Gene3D" id="3.30.470.10">
    <property type="match status" value="1"/>
</dbReference>
<dbReference type="Gene3D" id="3.20.10.10">
    <property type="entry name" value="D-amino Acid Aminotransferase, subunit A, domain 2"/>
    <property type="match status" value="1"/>
</dbReference>
<dbReference type="InterPro" id="IPR001544">
    <property type="entry name" value="Aminotrans_IV"/>
</dbReference>
<dbReference type="InterPro" id="IPR036038">
    <property type="entry name" value="Aminotransferase-like"/>
</dbReference>
<dbReference type="InterPro" id="IPR005786">
    <property type="entry name" value="B_amino_transII"/>
</dbReference>
<dbReference type="InterPro" id="IPR043132">
    <property type="entry name" value="BCAT-like_C"/>
</dbReference>
<dbReference type="InterPro" id="IPR043131">
    <property type="entry name" value="BCAT-like_N"/>
</dbReference>
<dbReference type="InterPro" id="IPR033939">
    <property type="entry name" value="BCAT_family"/>
</dbReference>
<dbReference type="PANTHER" id="PTHR42825">
    <property type="entry name" value="AMINO ACID AMINOTRANSFERASE"/>
    <property type="match status" value="1"/>
</dbReference>
<dbReference type="PANTHER" id="PTHR42825:SF2">
    <property type="entry name" value="BRANCHED-CHAIN-AMINO-ACID AMINOTRANSFERASE 3, CHLOROPLASTIC-RELATED"/>
    <property type="match status" value="1"/>
</dbReference>
<dbReference type="Pfam" id="PF01063">
    <property type="entry name" value="Aminotran_4"/>
    <property type="match status" value="1"/>
</dbReference>
<dbReference type="PIRSF" id="PIRSF006468">
    <property type="entry name" value="BCAT1"/>
    <property type="match status" value="1"/>
</dbReference>
<dbReference type="SUPFAM" id="SSF56752">
    <property type="entry name" value="D-aminoacid aminotransferase-like PLP-dependent enzymes"/>
    <property type="match status" value="1"/>
</dbReference>
<keyword id="KW-0032">Aminotransferase</keyword>
<keyword id="KW-0663">Pyridoxal phosphate</keyword>
<keyword id="KW-1185">Reference proteome</keyword>
<keyword id="KW-0808">Transferase</keyword>
<comment type="function">
    <text evidence="2 5">Aminotransferase; part of the gene cluster that mediates the biosynthesis of oxaleimides, cytotoxic compounds containing an unusual disubstituted succinimide moiety (PubMed:28365998). The first step of the pathway is provided by the HR-PKS poxF that serves in a new mode of collaborative biosynthesis with the PKS-NRPS poxE, by providing the olefin containing amino acid substrate via the synthesis of an ACP-bound dec-4-enoate (PubMed:28365998). The cytochrome P450 monooxygenase poxM-catalyzed oxidation at the alpha-position creates the enzyme-bound 2-hydroxydec-4-enoyl-ACP thioester, which may be prone to spontaneous hydrolysis to yield 2-hydroxydec-4-enoic acid due to increased electrophilicity of the carbonyl (PubMed:28365998). 2-hydroxydec-4-enoic acid can then be further oxidized by poxM to yield the alpha-ketoacid 2-oxodec-4-enoicacid, which is reductively aminated by the aminotransferase poxL to yield (S,E)-2-aminodec-4-enoic acid (PubMed:28365998). The Hybrid PKS-NRPS synthetase poxE then performs condensation between the octaketide product of its PKS modules and the amino group of (S,E)-2-aminodec-4-enoic acid which is activated and incorporated by the adenylation domain (PubMed:28365998). The resulting aminoacyl product can be cyclized by the Diels-Alderase PoxQ and reductively released by the reductive (R) domain of poxE to yield an aldehyde intermediate (Probable) (PubMed:28365998). The released aldehyde is then substrate for a Knoevenagel condensation by the hydrolyase poxO followed by an oxidation at the 5-position of the pyrrolidone ring (PubMed:28365998). The presence of the olefin from the amino acid building block allows for migration of the substituted allyl group to occur (PubMed:28365998). This allylic transposition reaction takes place in a conjugate addition, semipinacol-like fashion to yield a succinimide intermediate (PubMed:28365998). Iterative two-electron oxidations of the C7 methyl of the succinimide intermediate to the carboxylic acid can be catalyzed by one of two remaining cytochrome P450 monooxygenasess poxC or poxD to yield oxaleimide A (PubMed:28365998). Subsequent oxidation yields the maleimide scaffold oxaleimide I (PubMed:28365998). Both oxaleimide A and oxaleimide I can undergo oxidative modifications in the decalin ring to yield the series of products oxaleimides B to H (PubMed:28365998).</text>
</comment>
<comment type="cofactor">
    <cofactor evidence="1">
        <name>pyridoxal 5'-phosphate</name>
        <dbReference type="ChEBI" id="CHEBI:597326"/>
    </cofactor>
</comment>
<comment type="pathway">
    <text evidence="2">Secondary metabolite biosynthesis.</text>
</comment>
<comment type="induction">
    <text evidence="2">Expression is positively regulated by the oxaleimides biosynthesis cluster-specific transcription factor poxB.</text>
</comment>
<comment type="similarity">
    <text evidence="4">Belongs to the class-IV pyridoxal-phosphate-dependent aminotransferase family.</text>
</comment>
<gene>
    <name evidence="3" type="primary">poxL</name>
    <name type="ORF">PDE_04024</name>
</gene>
<evidence type="ECO:0000250" key="1">
    <source>
        <dbReference type="UniProtKB" id="P19938"/>
    </source>
</evidence>
<evidence type="ECO:0000269" key="2">
    <source>
    </source>
</evidence>
<evidence type="ECO:0000303" key="3">
    <source>
    </source>
</evidence>
<evidence type="ECO:0000305" key="4"/>
<evidence type="ECO:0000305" key="5">
    <source>
    </source>
</evidence>
<proteinExistence type="evidence at protein level"/>
<name>POXL_PENO1</name>
<sequence length="365" mass="39719">MAPKDFFPPAPLDLDWDNIGIKVREVNGHVECAYNVATESWSEPQVVKGIDLTISGLSPALNYGQQAYEGMKAFRDPQGQIHIFRPEVHAARMAHSCEVVSIPPIPQVQFIRSVALAVSVNAEFVPPFDSSAALYIRPLAFGSGPQINLAQPEEYTFCVFVLPVTSLLGTKPVDALIMEEFDRTAPMGSGNAKVGGNYAPVLRWAAKARARGYGIPLHLDSKTRTEIDEFSAAGFIGVRDDDGKTTIVVPDSSCIIQSVTSDSCVQLARSYGWSVEVRPIKYTELPEFSEVLAVGTAAVIVPIGSITRDSLRDLIVYKPSEDGGYPCADKLFKSIKDIQRGLGKDVFNWCVPVHEPGAYFQPVSA</sequence>
<organism>
    <name type="scientific">Penicillium oxalicum (strain 114-2 / CGMCC 5302)</name>
    <name type="common">Penicillium decumbens</name>
    <dbReference type="NCBI Taxonomy" id="933388"/>
    <lineage>
        <taxon>Eukaryota</taxon>
        <taxon>Fungi</taxon>
        <taxon>Dikarya</taxon>
        <taxon>Ascomycota</taxon>
        <taxon>Pezizomycotina</taxon>
        <taxon>Eurotiomycetes</taxon>
        <taxon>Eurotiomycetidae</taxon>
        <taxon>Eurotiales</taxon>
        <taxon>Aspergillaceae</taxon>
        <taxon>Penicillium</taxon>
    </lineage>
</organism>
<protein>
    <recommendedName>
        <fullName evidence="3">Aminotransferase poxL</fullName>
        <ecNumber evidence="2">2.6.1.-</ecNumber>
    </recommendedName>
    <alternativeName>
        <fullName evidence="3">Oxaleimides biosynthesis cluster protein L</fullName>
    </alternativeName>
</protein>
<accession>S7ZEI5</accession>